<keyword id="KW-0169">Cobalamin biosynthesis</keyword>
<keyword id="KW-0315">Glutamine amidotransferase</keyword>
<gene>
    <name evidence="1" type="primary">cobQ</name>
    <name type="ordered locus">Daro_0144</name>
</gene>
<protein>
    <recommendedName>
        <fullName evidence="1">Cobyric acid synthase</fullName>
    </recommendedName>
</protein>
<proteinExistence type="inferred from homology"/>
<feature type="chain" id="PRO_0000332335" description="Cobyric acid synthase">
    <location>
        <begin position="1"/>
        <end position="487"/>
    </location>
</feature>
<feature type="domain" description="GATase cobBQ-type" evidence="1">
    <location>
        <begin position="251"/>
        <end position="439"/>
    </location>
</feature>
<feature type="active site" description="Nucleophile" evidence="1">
    <location>
        <position position="332"/>
    </location>
</feature>
<feature type="active site" evidence="1">
    <location>
        <position position="431"/>
    </location>
</feature>
<sequence length="487" mass="51874">MPCYSLMVQGTTSDAGKSTLVAALCRILKRRGVRVAPFKPQNMALNSAVTVDGGEIGRAQALQALACGLAPHTDFNPVLLKPTTDKKAQVIIHGKVAIDLDAKAYHAYKPRAMGAVLESWARLTAEYECVVVEGAGSPAEINLRDRDIANMGFAEAVDCPVIIVADIDRGGVFAHLVGTLELLSPSEKNRVKGFVINRFRGDIGLLESGLTWLEARTGKPVLGVLPYLHGLMLDAEDAIATAAVGGKKAAKLKVVAPAYPRVSNHNDLDPLRLHPEVDFRWIGPGETPPAADLIVLPGSKAVRADLDWLRAQGWDKAIHKHLRYGGKLIGLCGGYQMLGRMIHDPQGLEGQPGSTPGLGVLAVETTLEAEKQLRNVSGHLSLPGRPAMTGYEIHLGVTRGEGLAKGAVELADGVHDGAISADDQVFATYCHGVLDHPEALTALLAWAGMSESEQVDFAARREADLDRLADSVEAALDWEKLSALLPG</sequence>
<reference key="1">
    <citation type="journal article" date="2009" name="BMC Genomics">
        <title>Metabolic analysis of the soil microbe Dechloromonas aromatica str. RCB: indications of a surprisingly complex life-style and cryptic anaerobic pathways for aromatic degradation.</title>
        <authorList>
            <person name="Salinero K.K."/>
            <person name="Keller K."/>
            <person name="Feil W.S."/>
            <person name="Feil H."/>
            <person name="Trong S."/>
            <person name="Di Bartolo G."/>
            <person name="Lapidus A."/>
        </authorList>
    </citation>
    <scope>NUCLEOTIDE SEQUENCE [LARGE SCALE GENOMIC DNA]</scope>
    <source>
        <strain>RCB</strain>
    </source>
</reference>
<evidence type="ECO:0000255" key="1">
    <source>
        <dbReference type="HAMAP-Rule" id="MF_00028"/>
    </source>
</evidence>
<comment type="function">
    <text evidence="1">Catalyzes amidations at positions B, D, E, and G on adenosylcobyrinic A,C-diamide. NH(2) groups are provided by glutamine, and one molecule of ATP is hydrogenolyzed for each amidation.</text>
</comment>
<comment type="pathway">
    <text evidence="1">Cofactor biosynthesis; adenosylcobalamin biosynthesis.</text>
</comment>
<comment type="similarity">
    <text evidence="1">Belongs to the CobB/CobQ family. CobQ subfamily.</text>
</comment>
<dbReference type="EMBL" id="CP000089">
    <property type="protein sequence ID" value="AAZ44903.1"/>
    <property type="molecule type" value="Genomic_DNA"/>
</dbReference>
<dbReference type="SMR" id="Q47JS8"/>
<dbReference type="STRING" id="159087.Daro_0144"/>
<dbReference type="KEGG" id="dar:Daro_0144"/>
<dbReference type="eggNOG" id="COG1492">
    <property type="taxonomic scope" value="Bacteria"/>
</dbReference>
<dbReference type="HOGENOM" id="CLU_019250_2_2_4"/>
<dbReference type="OrthoDB" id="9808302at2"/>
<dbReference type="UniPathway" id="UPA00148"/>
<dbReference type="GO" id="GO:0015420">
    <property type="term" value="F:ABC-type vitamin B12 transporter activity"/>
    <property type="evidence" value="ECO:0007669"/>
    <property type="project" value="UniProtKB-UniRule"/>
</dbReference>
<dbReference type="GO" id="GO:0003824">
    <property type="term" value="F:catalytic activity"/>
    <property type="evidence" value="ECO:0007669"/>
    <property type="project" value="InterPro"/>
</dbReference>
<dbReference type="GO" id="GO:0009236">
    <property type="term" value="P:cobalamin biosynthetic process"/>
    <property type="evidence" value="ECO:0007669"/>
    <property type="project" value="UniProtKB-UniRule"/>
</dbReference>
<dbReference type="CDD" id="cd05389">
    <property type="entry name" value="CobQ_N"/>
    <property type="match status" value="1"/>
</dbReference>
<dbReference type="CDD" id="cd01750">
    <property type="entry name" value="GATase1_CobQ"/>
    <property type="match status" value="1"/>
</dbReference>
<dbReference type="Gene3D" id="3.40.50.880">
    <property type="match status" value="1"/>
</dbReference>
<dbReference type="Gene3D" id="3.40.50.300">
    <property type="entry name" value="P-loop containing nucleotide triphosphate hydrolases"/>
    <property type="match status" value="1"/>
</dbReference>
<dbReference type="HAMAP" id="MF_00028">
    <property type="entry name" value="CobQ"/>
    <property type="match status" value="1"/>
</dbReference>
<dbReference type="InterPro" id="IPR029062">
    <property type="entry name" value="Class_I_gatase-like"/>
</dbReference>
<dbReference type="InterPro" id="IPR002586">
    <property type="entry name" value="CobQ/CobB/MinD/ParA_Nub-bd_dom"/>
</dbReference>
<dbReference type="InterPro" id="IPR033949">
    <property type="entry name" value="CobQ_GATase1"/>
</dbReference>
<dbReference type="InterPro" id="IPR047045">
    <property type="entry name" value="CobQ_N"/>
</dbReference>
<dbReference type="InterPro" id="IPR004459">
    <property type="entry name" value="CobQ_synth"/>
</dbReference>
<dbReference type="InterPro" id="IPR011698">
    <property type="entry name" value="GATase_3"/>
</dbReference>
<dbReference type="InterPro" id="IPR027417">
    <property type="entry name" value="P-loop_NTPase"/>
</dbReference>
<dbReference type="NCBIfam" id="TIGR00313">
    <property type="entry name" value="cobQ"/>
    <property type="match status" value="1"/>
</dbReference>
<dbReference type="NCBIfam" id="NF001989">
    <property type="entry name" value="PRK00784.1"/>
    <property type="match status" value="1"/>
</dbReference>
<dbReference type="PANTHER" id="PTHR21343:SF1">
    <property type="entry name" value="COBYRIC ACID SYNTHASE"/>
    <property type="match status" value="1"/>
</dbReference>
<dbReference type="PANTHER" id="PTHR21343">
    <property type="entry name" value="DETHIOBIOTIN SYNTHETASE"/>
    <property type="match status" value="1"/>
</dbReference>
<dbReference type="Pfam" id="PF01656">
    <property type="entry name" value="CbiA"/>
    <property type="match status" value="1"/>
</dbReference>
<dbReference type="Pfam" id="PF07685">
    <property type="entry name" value="GATase_3"/>
    <property type="match status" value="1"/>
</dbReference>
<dbReference type="SUPFAM" id="SSF52317">
    <property type="entry name" value="Class I glutamine amidotransferase-like"/>
    <property type="match status" value="1"/>
</dbReference>
<dbReference type="SUPFAM" id="SSF52540">
    <property type="entry name" value="P-loop containing nucleoside triphosphate hydrolases"/>
    <property type="match status" value="1"/>
</dbReference>
<dbReference type="PROSITE" id="PS51274">
    <property type="entry name" value="GATASE_COBBQ"/>
    <property type="match status" value="1"/>
</dbReference>
<organism>
    <name type="scientific">Dechloromonas aromatica (strain RCB)</name>
    <dbReference type="NCBI Taxonomy" id="159087"/>
    <lineage>
        <taxon>Bacteria</taxon>
        <taxon>Pseudomonadati</taxon>
        <taxon>Pseudomonadota</taxon>
        <taxon>Betaproteobacteria</taxon>
        <taxon>Rhodocyclales</taxon>
        <taxon>Azonexaceae</taxon>
        <taxon>Dechloromonas</taxon>
    </lineage>
</organism>
<accession>Q47JS8</accession>
<name>COBQ_DECAR</name>